<dbReference type="EC" id="2.4.1.109" evidence="1"/>
<dbReference type="EMBL" id="X83797">
    <property type="protein sequence ID" value="CAA58728.1"/>
    <property type="molecule type" value="Genomic_DNA"/>
</dbReference>
<dbReference type="EMBL" id="X90565">
    <property type="protein sequence ID" value="CAA62176.1"/>
    <property type="molecule type" value="Genomic_DNA"/>
</dbReference>
<dbReference type="EMBL" id="Z75229">
    <property type="protein sequence ID" value="CAA99641.1"/>
    <property type="molecule type" value="Genomic_DNA"/>
</dbReference>
<dbReference type="EMBL" id="BK006948">
    <property type="protein sequence ID" value="DAA11085.1"/>
    <property type="molecule type" value="Genomic_DNA"/>
</dbReference>
<dbReference type="PIR" id="S58331">
    <property type="entry name" value="S58331"/>
</dbReference>
<dbReference type="RefSeq" id="NP_014966.1">
    <property type="nucleotide sequence ID" value="NM_001183741.1"/>
</dbReference>
<dbReference type="PDB" id="6ZQQ">
    <property type="method" value="X-ray"/>
    <property type="resolution" value="1.90 A"/>
    <property type="chains" value="A/B/C/D=331-532"/>
</dbReference>
<dbReference type="PDBsum" id="6ZQQ"/>
<dbReference type="SMR" id="P47190"/>
<dbReference type="BioGRID" id="34707">
    <property type="interactions" value="150"/>
</dbReference>
<dbReference type="ComplexPortal" id="CPX-3037">
    <property type="entry name" value="PMT1-PMT3 dolichyl-phosphate-mannose-protein mannosyltransferase complex"/>
</dbReference>
<dbReference type="ComplexPortal" id="CPX-3040">
    <property type="entry name" value="PMT5-PMT3 dolichyl-phosphate-mannose-protein mannosyltransferase complex"/>
</dbReference>
<dbReference type="DIP" id="DIP-5158N"/>
<dbReference type="FunCoup" id="P47190">
    <property type="interactions" value="1099"/>
</dbReference>
<dbReference type="IntAct" id="P47190">
    <property type="interactions" value="5"/>
</dbReference>
<dbReference type="STRING" id="4932.YOR321W"/>
<dbReference type="CAZy" id="GT39">
    <property type="family name" value="Glycosyltransferase Family 39"/>
</dbReference>
<dbReference type="GlyCosmos" id="P47190">
    <property type="glycosylation" value="3 sites, No reported glycans"/>
</dbReference>
<dbReference type="GlyGen" id="P47190">
    <property type="glycosylation" value="3 sites"/>
</dbReference>
<dbReference type="iPTMnet" id="P47190"/>
<dbReference type="PaxDb" id="4932-YOR321W"/>
<dbReference type="PeptideAtlas" id="P47190"/>
<dbReference type="EnsemblFungi" id="YOR321W_mRNA">
    <property type="protein sequence ID" value="YOR321W"/>
    <property type="gene ID" value="YOR321W"/>
</dbReference>
<dbReference type="GeneID" id="854499"/>
<dbReference type="KEGG" id="sce:YOR321W"/>
<dbReference type="AGR" id="SGD:S000005848"/>
<dbReference type="SGD" id="S000005848">
    <property type="gene designation" value="PMT3"/>
</dbReference>
<dbReference type="VEuPathDB" id="FungiDB:YOR321W"/>
<dbReference type="eggNOG" id="KOG3359">
    <property type="taxonomic scope" value="Eukaryota"/>
</dbReference>
<dbReference type="GeneTree" id="ENSGT00940000156829"/>
<dbReference type="HOGENOM" id="CLU_008438_5_0_1"/>
<dbReference type="InParanoid" id="P47190"/>
<dbReference type="OMA" id="WEVSAYG"/>
<dbReference type="OrthoDB" id="292747at2759"/>
<dbReference type="BioCyc" id="YEAST:YOR321W-MONOMER"/>
<dbReference type="BRENDA" id="2.4.1.109">
    <property type="organism ID" value="984"/>
</dbReference>
<dbReference type="UniPathway" id="UPA00378"/>
<dbReference type="BioGRID-ORCS" id="854499">
    <property type="hits" value="0 hits in 10 CRISPR screens"/>
</dbReference>
<dbReference type="PRO" id="PR:P47190"/>
<dbReference type="Proteomes" id="UP000002311">
    <property type="component" value="Chromosome XV"/>
</dbReference>
<dbReference type="RNAct" id="P47190">
    <property type="molecule type" value="protein"/>
</dbReference>
<dbReference type="GO" id="GO:0097583">
    <property type="term" value="C:dolichyl-phosphate-mannose-protein mannosyltransferase Pmt1p-Pmt3p dimer complex"/>
    <property type="evidence" value="ECO:0000314"/>
    <property type="project" value="SGD"/>
</dbReference>
<dbReference type="GO" id="GO:0097585">
    <property type="term" value="C:dolichyl-phosphate-mannose-protein mannosyltransferase Pmt5p-Pmt3p dimer complex"/>
    <property type="evidence" value="ECO:0000314"/>
    <property type="project" value="SGD"/>
</dbReference>
<dbReference type="GO" id="GO:0005783">
    <property type="term" value="C:endoplasmic reticulum"/>
    <property type="evidence" value="ECO:0007005"/>
    <property type="project" value="SGD"/>
</dbReference>
<dbReference type="GO" id="GO:0005789">
    <property type="term" value="C:endoplasmic reticulum membrane"/>
    <property type="evidence" value="ECO:0000250"/>
    <property type="project" value="ComplexPortal"/>
</dbReference>
<dbReference type="GO" id="GO:0004169">
    <property type="term" value="F:dolichyl-phosphate-mannose-protein mannosyltransferase activity"/>
    <property type="evidence" value="ECO:0000247"/>
    <property type="project" value="SGD"/>
</dbReference>
<dbReference type="GO" id="GO:0009272">
    <property type="term" value="P:fungal-type cell wall biogenesis"/>
    <property type="evidence" value="ECO:0000250"/>
    <property type="project" value="ComplexPortal"/>
</dbReference>
<dbReference type="GO" id="GO:0006493">
    <property type="term" value="P:protein O-linked glycosylation"/>
    <property type="evidence" value="ECO:0000247"/>
    <property type="project" value="SGD"/>
</dbReference>
<dbReference type="GO" id="GO:0035269">
    <property type="term" value="P:protein O-linked mannosylation"/>
    <property type="evidence" value="ECO:0000316"/>
    <property type="project" value="SGD"/>
</dbReference>
<dbReference type="GO" id="GO:1900101">
    <property type="term" value="P:regulation of endoplasmic reticulum unfolded protein response"/>
    <property type="evidence" value="ECO:0000303"/>
    <property type="project" value="ComplexPortal"/>
</dbReference>
<dbReference type="CDD" id="cd23284">
    <property type="entry name" value="beta-trefoil_MIR_PMT2-like"/>
    <property type="match status" value="1"/>
</dbReference>
<dbReference type="FunFam" id="2.80.10.50:FF:000012">
    <property type="entry name" value="Protein O-mannosyl-transferase 1"/>
    <property type="match status" value="1"/>
</dbReference>
<dbReference type="Gene3D" id="2.80.10.50">
    <property type="match status" value="1"/>
</dbReference>
<dbReference type="InterPro" id="IPR027005">
    <property type="entry name" value="GlyclTrfase_39-like"/>
</dbReference>
<dbReference type="InterPro" id="IPR003342">
    <property type="entry name" value="Glyco_trans_39/83"/>
</dbReference>
<dbReference type="InterPro" id="IPR036300">
    <property type="entry name" value="MIR_dom_sf"/>
</dbReference>
<dbReference type="InterPro" id="IPR016093">
    <property type="entry name" value="MIR_motif"/>
</dbReference>
<dbReference type="InterPro" id="IPR032421">
    <property type="entry name" value="PMT_4TMC"/>
</dbReference>
<dbReference type="PANTHER" id="PTHR10050">
    <property type="entry name" value="DOLICHYL-PHOSPHATE-MANNOSE--PROTEIN MANNOSYLTRANSFERASE"/>
    <property type="match status" value="1"/>
</dbReference>
<dbReference type="PANTHER" id="PTHR10050:SF46">
    <property type="entry name" value="PROTEIN O-MANNOSYL-TRANSFERASE 2"/>
    <property type="match status" value="1"/>
</dbReference>
<dbReference type="Pfam" id="PF02815">
    <property type="entry name" value="MIR"/>
    <property type="match status" value="1"/>
</dbReference>
<dbReference type="Pfam" id="PF02366">
    <property type="entry name" value="PMT"/>
    <property type="match status" value="1"/>
</dbReference>
<dbReference type="Pfam" id="PF16192">
    <property type="entry name" value="PMT_4TMC"/>
    <property type="match status" value="1"/>
</dbReference>
<dbReference type="SMART" id="SM00472">
    <property type="entry name" value="MIR"/>
    <property type="match status" value="3"/>
</dbReference>
<dbReference type="SUPFAM" id="SSF82109">
    <property type="entry name" value="MIR domain"/>
    <property type="match status" value="1"/>
</dbReference>
<dbReference type="PROSITE" id="PS50919">
    <property type="entry name" value="MIR"/>
    <property type="match status" value="3"/>
</dbReference>
<protein>
    <recommendedName>
        <fullName evidence="10">Dolichyl-phosphate-mannose--protein mannosyltransferase 3</fullName>
        <ecNumber evidence="1">2.4.1.109</ecNumber>
    </recommendedName>
</protein>
<keyword id="KW-0002">3D-structure</keyword>
<keyword id="KW-0256">Endoplasmic reticulum</keyword>
<keyword id="KW-0325">Glycoprotein</keyword>
<keyword id="KW-0328">Glycosyltransferase</keyword>
<keyword id="KW-0472">Membrane</keyword>
<keyword id="KW-1185">Reference proteome</keyword>
<keyword id="KW-0677">Repeat</keyword>
<keyword id="KW-0808">Transferase</keyword>
<keyword id="KW-0812">Transmembrane</keyword>
<keyword id="KW-1133">Transmembrane helix</keyword>
<accession>P47190</accession>
<accession>D6W319</accession>
<name>PMT3_YEAST</name>
<gene>
    <name evidence="9" type="primary">PMT3</name>
    <name evidence="11" type="ordered locus">YOR321W</name>
    <name evidence="11" type="ORF">O6148</name>
</gene>
<organism>
    <name type="scientific">Saccharomyces cerevisiae (strain ATCC 204508 / S288c)</name>
    <name type="common">Baker's yeast</name>
    <dbReference type="NCBI Taxonomy" id="559292"/>
    <lineage>
        <taxon>Eukaryota</taxon>
        <taxon>Fungi</taxon>
        <taxon>Dikarya</taxon>
        <taxon>Ascomycota</taxon>
        <taxon>Saccharomycotina</taxon>
        <taxon>Saccharomycetes</taxon>
        <taxon>Saccharomycetales</taxon>
        <taxon>Saccharomycetaceae</taxon>
        <taxon>Saccharomyces</taxon>
    </lineage>
</organism>
<comment type="function">
    <text evidence="8">Protein O-mannosyltransferase involved in O-glycosylation which is essential for cell wall rigidity. Forms a heterodimeric complex with PMT5 and more rarely with PMT1 to transfer mannose from Dol-P-mannose to Ser or Thr residues on proteins. Seems to have redundant activity to PMT2.</text>
</comment>
<comment type="catalytic activity">
    <reaction evidence="1">
        <text>a di-trans,poly-cis-dolichyl beta-D-mannosyl phosphate + L-seryl-[protein] = 3-O-(alpha-D-mannosyl)-L-seryl-[protein] + a di-trans,poly-cis-dolichyl phosphate + H(+)</text>
        <dbReference type="Rhea" id="RHEA:17377"/>
        <dbReference type="Rhea" id="RHEA-COMP:9863"/>
        <dbReference type="Rhea" id="RHEA-COMP:13546"/>
        <dbReference type="Rhea" id="RHEA-COMP:19498"/>
        <dbReference type="Rhea" id="RHEA-COMP:19501"/>
        <dbReference type="ChEBI" id="CHEBI:15378"/>
        <dbReference type="ChEBI" id="CHEBI:29999"/>
        <dbReference type="ChEBI" id="CHEBI:57683"/>
        <dbReference type="ChEBI" id="CHEBI:58211"/>
        <dbReference type="ChEBI" id="CHEBI:137321"/>
        <dbReference type="EC" id="2.4.1.109"/>
    </reaction>
</comment>
<comment type="catalytic activity">
    <reaction evidence="1">
        <text>a di-trans,poly-cis-dolichyl beta-D-mannosyl phosphate + L-threonyl-[protein] = 3-O-(alpha-D-mannosyl)-L-threonyl-[protein] + a di-trans,poly-cis-dolichyl phosphate + H(+)</text>
        <dbReference type="Rhea" id="RHEA:53396"/>
        <dbReference type="Rhea" id="RHEA-COMP:11060"/>
        <dbReference type="Rhea" id="RHEA-COMP:13547"/>
        <dbReference type="Rhea" id="RHEA-COMP:19498"/>
        <dbReference type="Rhea" id="RHEA-COMP:19501"/>
        <dbReference type="ChEBI" id="CHEBI:15378"/>
        <dbReference type="ChEBI" id="CHEBI:30013"/>
        <dbReference type="ChEBI" id="CHEBI:57683"/>
        <dbReference type="ChEBI" id="CHEBI:58211"/>
        <dbReference type="ChEBI" id="CHEBI:137323"/>
        <dbReference type="EC" id="2.4.1.109"/>
    </reaction>
</comment>
<comment type="pathway">
    <text evidence="10">Protein modification; protein glycosylation.</text>
</comment>
<comment type="subunit">
    <text evidence="5">PMT3 and PMT5 form a functional heterodimer. Also forms a minor complex with PMT1.</text>
</comment>
<comment type="interaction">
    <interactant intactId="EBI-13579">
        <id>P47190</id>
    </interactant>
    <interactant intactId="EBI-13567">
        <id>P33775</id>
        <label>PMT1</label>
    </interactant>
    <organismsDiffer>false</organismsDiffer>
    <experiments>3</experiments>
</comment>
<comment type="subcellular location">
    <subcellularLocation>
        <location evidence="2">Endoplasmic reticulum membrane</location>
        <topology evidence="3">Multi-pass membrane protein</topology>
    </subcellularLocation>
</comment>
<comment type="induction">
    <text evidence="7">Specifically induced upon tunicamycin, DTT as well as rhodanine-3-acetic acid derivative OGT2468 treatment.</text>
</comment>
<comment type="disruption phenotype">
    <text evidence="8">Affects O-mannosylation activity only when PTM1 and PTM2 are absent.</text>
</comment>
<comment type="miscellaneous">
    <text evidence="6">Present with 2720 molecules/cell in log phase SD medium.</text>
</comment>
<comment type="similarity">
    <text evidence="10">Belongs to the glycosyltransferase 39 family.</text>
</comment>
<proteinExistence type="evidence at protein level"/>
<sequence>MPYRVATGYSEKSTDDDLIWRTPIVKEELEDADNFLKDDAELYDKVKNESAVSHLDTIVMPIIFTVLGMFTRMYKIGRNNHVVWDEAHFGKFGSYYLRHEFYHDVHPPLGKMLVGLSGYLAGYNGSWDFPSGEVYPDYIDYVKMRLFQAMFSSLCVPLAYFTGRAIGFSRLSVWLFTILVIFENSYATLGKFILLDSMLLFFTVSSYFCLAKFHTMRKSPFSARWWLWLCLTGLNLGCAISVKMVGLFIISVVGIYTISELWNLLSDRSVSWKVYVNHWLARIFGLIIIPVCVFLLCFKIHFDLLSNSGPGDSTMPSLFQASLNGTKVGKGPRDVALGSSIISIKNQALGGALLHSHVQPFPEGSEQQQVTVYGYSDANNEWFFQRIRGVEPWTDAENKTIEFVKGGEMYRLMHRLTGKNLHTHEVPAPISKSEYEVSAYGDVDLGDYKDNWIIEIVEQVGEEDPTLLHPLSTSFRIKNSILGCYLAQSGKHLPEWGFRQGEVVCLKHASKRDKRTWWNIETHENERLPQGEDFVYPKTSFFRNFMQLNSAMMATNNALVPNPEKFDGIASSAWQWPTLNVGVRLCEWSEKSIKYFLLGSPASVWPSSIAVCALIIHVIFLTLKWQRQCVILSDPVERDVFVMAAFYPLLAWLLHYMPFVVMSRVVYAHHYLPTLYFALMILSYYFDMITKRWATRNTGKFLRLGAYIVYGSIVIAGFFYFSPFSFGMDGPVDDYAYLAWLPTWQIVEDIRNT</sequence>
<feature type="chain" id="PRO_0000121493" description="Dolichyl-phosphate-mannose--protein mannosyltransferase 3">
    <location>
        <begin position="1"/>
        <end position="753"/>
    </location>
</feature>
<feature type="topological domain" description="Cytoplasmic" evidence="3">
    <location>
        <begin position="1"/>
        <end position="50"/>
    </location>
</feature>
<feature type="transmembrane region" description="Helical" evidence="3">
    <location>
        <begin position="51"/>
        <end position="71"/>
    </location>
</feature>
<feature type="topological domain" description="Lumenal" evidence="3">
    <location>
        <begin position="72"/>
        <end position="148"/>
    </location>
</feature>
<feature type="transmembrane region" description="Helical" evidence="3">
    <location>
        <begin position="149"/>
        <end position="169"/>
    </location>
</feature>
<feature type="topological domain" description="Cytoplasmic" evidence="3">
    <location>
        <begin position="170"/>
        <end position="174"/>
    </location>
</feature>
<feature type="transmembrane region" description="Helical" evidence="3">
    <location>
        <begin position="175"/>
        <end position="195"/>
    </location>
</feature>
<feature type="topological domain" description="Lumenal" evidence="3">
    <location>
        <begin position="196"/>
        <end position="235"/>
    </location>
</feature>
<feature type="transmembrane region" description="Helical" evidence="3">
    <location>
        <begin position="236"/>
        <end position="256"/>
    </location>
</feature>
<feature type="topological domain" description="Cytoplasmic" evidence="3">
    <location>
        <begin position="257"/>
        <end position="282"/>
    </location>
</feature>
<feature type="transmembrane region" description="Helical" evidence="3">
    <location>
        <begin position="283"/>
        <end position="303"/>
    </location>
</feature>
<feature type="topological domain" description="Lumenal" evidence="3">
    <location>
        <begin position="304"/>
        <end position="602"/>
    </location>
</feature>
<feature type="transmembrane region" description="Helical" evidence="3">
    <location>
        <begin position="603"/>
        <end position="623"/>
    </location>
</feature>
<feature type="topological domain" description="Cytoplasmic" evidence="3">
    <location>
        <begin position="624"/>
        <end position="639"/>
    </location>
</feature>
<feature type="transmembrane region" description="Helical" evidence="3">
    <location>
        <begin position="640"/>
        <end position="660"/>
    </location>
</feature>
<feature type="topological domain" description="Lumenal" evidence="3">
    <location>
        <begin position="661"/>
        <end position="665"/>
    </location>
</feature>
<feature type="transmembrane region" description="Helical" evidence="3">
    <location>
        <begin position="666"/>
        <end position="686"/>
    </location>
</feature>
<feature type="topological domain" description="Cytoplasmic" evidence="3">
    <location>
        <begin position="687"/>
        <end position="703"/>
    </location>
</feature>
<feature type="transmembrane region" description="Helical" evidence="3">
    <location>
        <begin position="704"/>
        <end position="724"/>
    </location>
</feature>
<feature type="topological domain" description="Lumenal" evidence="3">
    <location>
        <begin position="725"/>
        <end position="753"/>
    </location>
</feature>
<feature type="domain" description="MIR 1" evidence="4">
    <location>
        <begin position="332"/>
        <end position="387"/>
    </location>
</feature>
<feature type="domain" description="MIR 2" evidence="4">
    <location>
        <begin position="401"/>
        <end position="457"/>
    </location>
</feature>
<feature type="domain" description="MIR 3" evidence="4">
    <location>
        <begin position="465"/>
        <end position="523"/>
    </location>
</feature>
<feature type="glycosylation site" description="N-linked (GlcNAc...) asparagine" evidence="3">
    <location>
        <position position="124"/>
    </location>
</feature>
<feature type="glycosylation site" description="N-linked (GlcNAc...) asparagine" evidence="3">
    <location>
        <position position="324"/>
    </location>
</feature>
<feature type="glycosylation site" description="N-linked (GlcNAc...) asparagine" evidence="3">
    <location>
        <position position="398"/>
    </location>
</feature>
<feature type="sequence conflict" description="In Ref. 1; CAA58728." evidence="10" ref="1">
    <original>E</original>
    <variation>H</variation>
    <location>
        <position position="397"/>
    </location>
</feature>
<feature type="sequence conflict" description="In Ref. 1; CAA58728." evidence="10" ref="1">
    <original>D</original>
    <variation>N</variation>
    <location>
        <position position="567"/>
    </location>
</feature>
<feature type="turn" evidence="12">
    <location>
        <begin position="337"/>
        <end position="339"/>
    </location>
</feature>
<feature type="strand" evidence="12">
    <location>
        <begin position="341"/>
        <end position="346"/>
    </location>
</feature>
<feature type="strand" evidence="12">
    <location>
        <begin position="353"/>
        <end position="360"/>
    </location>
</feature>
<feature type="strand" evidence="12">
    <location>
        <begin position="368"/>
        <end position="375"/>
    </location>
</feature>
<feature type="helix" evidence="12">
    <location>
        <begin position="378"/>
        <end position="380"/>
    </location>
</feature>
<feature type="strand" evidence="12">
    <location>
        <begin position="382"/>
        <end position="385"/>
    </location>
</feature>
<feature type="strand" evidence="12">
    <location>
        <begin position="409"/>
        <end position="414"/>
    </location>
</feature>
<feature type="turn" evidence="12">
    <location>
        <begin position="415"/>
        <end position="417"/>
    </location>
</feature>
<feature type="strand" evidence="12">
    <location>
        <begin position="420"/>
        <end position="427"/>
    </location>
</feature>
<feature type="strand" evidence="12">
    <location>
        <begin position="434"/>
        <end position="440"/>
    </location>
</feature>
<feature type="strand" evidence="12">
    <location>
        <begin position="443"/>
        <end position="445"/>
    </location>
</feature>
<feature type="helix" evidence="12">
    <location>
        <begin position="448"/>
        <end position="450"/>
    </location>
</feature>
<feature type="strand" evidence="12">
    <location>
        <begin position="452"/>
        <end position="459"/>
    </location>
</feature>
<feature type="strand" evidence="12">
    <location>
        <begin position="461"/>
        <end position="463"/>
    </location>
</feature>
<feature type="turn" evidence="12">
    <location>
        <begin position="470"/>
        <end position="472"/>
    </location>
</feature>
<feature type="strand" evidence="12">
    <location>
        <begin position="473"/>
        <end position="479"/>
    </location>
</feature>
<feature type="turn" evidence="12">
    <location>
        <begin position="480"/>
        <end position="482"/>
    </location>
</feature>
<feature type="strand" evidence="12">
    <location>
        <begin position="485"/>
        <end position="492"/>
    </location>
</feature>
<feature type="helix" evidence="12">
    <location>
        <begin position="495"/>
        <end position="497"/>
    </location>
</feature>
<feature type="strand" evidence="12">
    <location>
        <begin position="501"/>
        <end position="506"/>
    </location>
</feature>
<feature type="helix" evidence="12">
    <location>
        <begin position="514"/>
        <end position="516"/>
    </location>
</feature>
<feature type="strand" evidence="12">
    <location>
        <begin position="518"/>
        <end position="524"/>
    </location>
</feature>
<evidence type="ECO:0000250" key="1">
    <source>
        <dbReference type="UniProtKB" id="P31382"/>
    </source>
</evidence>
<evidence type="ECO:0000250" key="2">
    <source>
        <dbReference type="UniProtKB" id="P33775"/>
    </source>
</evidence>
<evidence type="ECO:0000255" key="3"/>
<evidence type="ECO:0000255" key="4">
    <source>
        <dbReference type="PROSITE-ProRule" id="PRU00131"/>
    </source>
</evidence>
<evidence type="ECO:0000269" key="5">
    <source>
    </source>
</evidence>
<evidence type="ECO:0000269" key="6">
    <source>
    </source>
</evidence>
<evidence type="ECO:0000269" key="7">
    <source>
    </source>
</evidence>
<evidence type="ECO:0000269" key="8">
    <source>
    </source>
</evidence>
<evidence type="ECO:0000303" key="9">
    <source>
    </source>
</evidence>
<evidence type="ECO:0000305" key="10"/>
<evidence type="ECO:0000312" key="11">
    <source>
        <dbReference type="SGD" id="S000005848"/>
    </source>
</evidence>
<evidence type="ECO:0007829" key="12">
    <source>
        <dbReference type="PDB" id="6ZQQ"/>
    </source>
</evidence>
<reference key="1">
    <citation type="journal article" date="1995" name="Yeast">
        <title>PMT3 and PMT4, two new members of the protein-O-mannosyltransferase gene family of Saccharomyces cerevisiae.</title>
        <authorList>
            <person name="Immervoll T."/>
            <person name="Gentzsch M."/>
            <person name="Tanner W."/>
        </authorList>
    </citation>
    <scope>NUCLEOTIDE SEQUENCE [GENOMIC DNA]</scope>
</reference>
<reference key="2">
    <citation type="journal article" date="1996" name="Yeast">
        <title>Sequencing of a 35.71 kb DNA segment on the right arm of yeast chromosome XV reveals regions of similarity to chromosomes I and XIII.</title>
        <authorList>
            <person name="Pearson B.M."/>
            <person name="Hernando Y."/>
            <person name="Payne J."/>
            <person name="Wolf S.S."/>
            <person name="Kalogeropoulos A."/>
            <person name="Schweizer M."/>
        </authorList>
    </citation>
    <scope>NUCLEOTIDE SEQUENCE [GENOMIC DNA]</scope>
    <source>
        <strain>ATCC 96604 / S288c / FY1679</strain>
    </source>
</reference>
<reference key="3">
    <citation type="journal article" date="1997" name="Nature">
        <title>The nucleotide sequence of Saccharomyces cerevisiae chromosome XV.</title>
        <authorList>
            <person name="Dujon B."/>
            <person name="Albermann K."/>
            <person name="Aldea M."/>
            <person name="Alexandraki D."/>
            <person name="Ansorge W."/>
            <person name="Arino J."/>
            <person name="Benes V."/>
            <person name="Bohn C."/>
            <person name="Bolotin-Fukuhara M."/>
            <person name="Bordonne R."/>
            <person name="Boyer J."/>
            <person name="Camasses A."/>
            <person name="Casamayor A."/>
            <person name="Casas C."/>
            <person name="Cheret G."/>
            <person name="Cziepluch C."/>
            <person name="Daignan-Fornier B."/>
            <person name="Dang V.-D."/>
            <person name="de Haan M."/>
            <person name="Delius H."/>
            <person name="Durand P."/>
            <person name="Fairhead C."/>
            <person name="Feldmann H."/>
            <person name="Gaillon L."/>
            <person name="Galisson F."/>
            <person name="Gamo F.-J."/>
            <person name="Gancedo C."/>
            <person name="Goffeau A."/>
            <person name="Goulding S.E."/>
            <person name="Grivell L.A."/>
            <person name="Habbig B."/>
            <person name="Hand N.J."/>
            <person name="Hani J."/>
            <person name="Hattenhorst U."/>
            <person name="Hebling U."/>
            <person name="Hernando Y."/>
            <person name="Herrero E."/>
            <person name="Heumann K."/>
            <person name="Hiesel R."/>
            <person name="Hilger F."/>
            <person name="Hofmann B."/>
            <person name="Hollenberg C.P."/>
            <person name="Hughes B."/>
            <person name="Jauniaux J.-C."/>
            <person name="Kalogeropoulos A."/>
            <person name="Katsoulou C."/>
            <person name="Kordes E."/>
            <person name="Lafuente M.J."/>
            <person name="Landt O."/>
            <person name="Louis E.J."/>
            <person name="Maarse A.C."/>
            <person name="Madania A."/>
            <person name="Mannhaupt G."/>
            <person name="Marck C."/>
            <person name="Martin R.P."/>
            <person name="Mewes H.-W."/>
            <person name="Michaux G."/>
            <person name="Paces V."/>
            <person name="Parle-McDermott A.G."/>
            <person name="Pearson B.M."/>
            <person name="Perrin A."/>
            <person name="Pettersson B."/>
            <person name="Poch O."/>
            <person name="Pohl T.M."/>
            <person name="Poirey R."/>
            <person name="Portetelle D."/>
            <person name="Pujol A."/>
            <person name="Purnelle B."/>
            <person name="Ramezani Rad M."/>
            <person name="Rechmann S."/>
            <person name="Schwager C."/>
            <person name="Schweizer M."/>
            <person name="Sor F."/>
            <person name="Sterky F."/>
            <person name="Tarassov I.A."/>
            <person name="Teodoru C."/>
            <person name="Tettelin H."/>
            <person name="Thierry A."/>
            <person name="Tobiasch E."/>
            <person name="Tzermia M."/>
            <person name="Uhlen M."/>
            <person name="Unseld M."/>
            <person name="Valens M."/>
            <person name="Vandenbol M."/>
            <person name="Vetter I."/>
            <person name="Vlcek C."/>
            <person name="Voet M."/>
            <person name="Volckaert G."/>
            <person name="Voss H."/>
            <person name="Wambutt R."/>
            <person name="Wedler H."/>
            <person name="Wiemann S."/>
            <person name="Winsor B."/>
            <person name="Wolfe K.H."/>
            <person name="Zollner A."/>
            <person name="Zumstein E."/>
            <person name="Kleine K."/>
        </authorList>
    </citation>
    <scope>NUCLEOTIDE SEQUENCE [LARGE SCALE GENOMIC DNA]</scope>
    <source>
        <strain>ATCC 204508 / S288c</strain>
    </source>
</reference>
<reference key="4">
    <citation type="journal article" date="2014" name="G3 (Bethesda)">
        <title>The reference genome sequence of Saccharomyces cerevisiae: Then and now.</title>
        <authorList>
            <person name="Engel S.R."/>
            <person name="Dietrich F.S."/>
            <person name="Fisk D.G."/>
            <person name="Binkley G."/>
            <person name="Balakrishnan R."/>
            <person name="Costanzo M.C."/>
            <person name="Dwight S.S."/>
            <person name="Hitz B.C."/>
            <person name="Karra K."/>
            <person name="Nash R.S."/>
            <person name="Weng S."/>
            <person name="Wong E.D."/>
            <person name="Lloyd P."/>
            <person name="Skrzypek M.S."/>
            <person name="Miyasato S.R."/>
            <person name="Simison M."/>
            <person name="Cherry J.M."/>
        </authorList>
    </citation>
    <scope>GENOME REANNOTATION</scope>
    <source>
        <strain>ATCC 204508 / S288c</strain>
    </source>
</reference>
<reference key="5">
    <citation type="journal article" date="1997" name="Glycobiology">
        <title>Protein-O-glycosylation in yeast: protein-specific mannosyltransferases.</title>
        <authorList>
            <person name="Gentzsch M."/>
            <person name="Tanner W."/>
        </authorList>
    </citation>
    <scope>DISRUPTION PHENOTYPE</scope>
    <scope>FUNCTION</scope>
</reference>
<reference key="6">
    <citation type="journal article" date="2003" name="J. Biol. Chem.">
        <title>Members of the evolutionarily conserved PMT family of protein O-mannosyltransferases form distinct protein complexes among themselves.</title>
        <authorList>
            <person name="Girrbach V."/>
            <person name="Strahl S."/>
        </authorList>
    </citation>
    <scope>INTERACTION WITH PMT5 AND PMT1</scope>
</reference>
<reference key="7">
    <citation type="journal article" date="2003" name="Nature">
        <title>Global analysis of protein expression in yeast.</title>
        <authorList>
            <person name="Ghaemmaghami S."/>
            <person name="Huh W.-K."/>
            <person name="Bower K."/>
            <person name="Howson R.W."/>
            <person name="Belle A."/>
            <person name="Dephoure N."/>
            <person name="O'Shea E.K."/>
            <person name="Weissman J.S."/>
        </authorList>
    </citation>
    <scope>LEVEL OF PROTEIN EXPRESSION [LARGE SCALE ANALYSIS]</scope>
</reference>
<reference key="8">
    <citation type="journal article" date="2006" name="Proc. Natl. Acad. Sci. U.S.A.">
        <title>A global topology map of the Saccharomyces cerevisiae membrane proteome.</title>
        <authorList>
            <person name="Kim H."/>
            <person name="Melen K."/>
            <person name="Oesterberg M."/>
            <person name="von Heijne G."/>
        </authorList>
    </citation>
    <scope>TOPOLOGY [LARGE SCALE ANALYSIS]</scope>
    <source>
        <strain>ATCC 208353 / W303-1A</strain>
    </source>
</reference>
<reference key="9">
    <citation type="journal article" date="2011" name="Mol. Microbiol.">
        <title>Functional and genomic analyses of blocked protein O-mannosylation in baker's yeast.</title>
        <authorList>
            <person name="Arroyo J."/>
            <person name="Hutzler J."/>
            <person name="Bermejo C."/>
            <person name="Ragni E."/>
            <person name="Garcia-Cantalejo J."/>
            <person name="Botias P."/>
            <person name="Piberger H."/>
            <person name="Schott A."/>
            <person name="Sanz A.B."/>
            <person name="Strahl S."/>
        </authorList>
    </citation>
    <scope>INDUCTION</scope>
</reference>